<dbReference type="EC" id="1.8.1.2" evidence="1"/>
<dbReference type="EMBL" id="CP000943">
    <property type="protein sequence ID" value="ACA19800.1"/>
    <property type="molecule type" value="Genomic_DNA"/>
</dbReference>
<dbReference type="RefSeq" id="WP_012335185.1">
    <property type="nucleotide sequence ID" value="NC_010511.1"/>
</dbReference>
<dbReference type="SMR" id="B0U8Y9"/>
<dbReference type="STRING" id="426117.M446_5484"/>
<dbReference type="KEGG" id="met:M446_5484"/>
<dbReference type="eggNOG" id="COG0155">
    <property type="taxonomic scope" value="Bacteria"/>
</dbReference>
<dbReference type="HOGENOM" id="CLU_001975_3_2_5"/>
<dbReference type="UniPathway" id="UPA00140">
    <property type="reaction ID" value="UER00207"/>
</dbReference>
<dbReference type="GO" id="GO:0009337">
    <property type="term" value="C:sulfite reductase complex (NADPH)"/>
    <property type="evidence" value="ECO:0007669"/>
    <property type="project" value="InterPro"/>
</dbReference>
<dbReference type="GO" id="GO:0051539">
    <property type="term" value="F:4 iron, 4 sulfur cluster binding"/>
    <property type="evidence" value="ECO:0007669"/>
    <property type="project" value="UniProtKB-KW"/>
</dbReference>
<dbReference type="GO" id="GO:0020037">
    <property type="term" value="F:heme binding"/>
    <property type="evidence" value="ECO:0007669"/>
    <property type="project" value="InterPro"/>
</dbReference>
<dbReference type="GO" id="GO:0046872">
    <property type="term" value="F:metal ion binding"/>
    <property type="evidence" value="ECO:0007669"/>
    <property type="project" value="UniProtKB-KW"/>
</dbReference>
<dbReference type="GO" id="GO:0050661">
    <property type="term" value="F:NADP binding"/>
    <property type="evidence" value="ECO:0007669"/>
    <property type="project" value="InterPro"/>
</dbReference>
<dbReference type="GO" id="GO:0050311">
    <property type="term" value="F:sulfite reductase (ferredoxin) activity"/>
    <property type="evidence" value="ECO:0007669"/>
    <property type="project" value="TreeGrafter"/>
</dbReference>
<dbReference type="GO" id="GO:0004783">
    <property type="term" value="F:sulfite reductase (NADPH) activity"/>
    <property type="evidence" value="ECO:0007669"/>
    <property type="project" value="UniProtKB-UniRule"/>
</dbReference>
<dbReference type="GO" id="GO:0019344">
    <property type="term" value="P:cysteine biosynthetic process"/>
    <property type="evidence" value="ECO:0007669"/>
    <property type="project" value="UniProtKB-KW"/>
</dbReference>
<dbReference type="GO" id="GO:0070814">
    <property type="term" value="P:hydrogen sulfide biosynthetic process"/>
    <property type="evidence" value="ECO:0007669"/>
    <property type="project" value="UniProtKB-UniRule"/>
</dbReference>
<dbReference type="GO" id="GO:0000103">
    <property type="term" value="P:sulfate assimilation"/>
    <property type="evidence" value="ECO:0007669"/>
    <property type="project" value="UniProtKB-UniRule"/>
</dbReference>
<dbReference type="FunFam" id="3.30.413.10:FF:000003">
    <property type="entry name" value="Sulfite reductase [NADPH] hemoprotein beta-component"/>
    <property type="match status" value="1"/>
</dbReference>
<dbReference type="FunFam" id="3.30.413.10:FF:000004">
    <property type="entry name" value="Sulfite reductase [NADPH] hemoprotein beta-component"/>
    <property type="match status" value="1"/>
</dbReference>
<dbReference type="Gene3D" id="3.30.413.10">
    <property type="entry name" value="Sulfite Reductase Hemoprotein, domain 1"/>
    <property type="match status" value="2"/>
</dbReference>
<dbReference type="HAMAP" id="MF_01540">
    <property type="entry name" value="CysI"/>
    <property type="match status" value="1"/>
</dbReference>
<dbReference type="InterPro" id="IPR011786">
    <property type="entry name" value="CysI"/>
</dbReference>
<dbReference type="InterPro" id="IPR005117">
    <property type="entry name" value="NiRdtase/SiRdtase_haem-b_fer"/>
</dbReference>
<dbReference type="InterPro" id="IPR036136">
    <property type="entry name" value="Nit/Sulf_reduc_fer-like_dom_sf"/>
</dbReference>
<dbReference type="InterPro" id="IPR006067">
    <property type="entry name" value="NO2/SO3_Rdtase_4Fe4S_dom"/>
</dbReference>
<dbReference type="InterPro" id="IPR045169">
    <property type="entry name" value="NO2/SO3_Rdtase_4Fe4S_prot"/>
</dbReference>
<dbReference type="InterPro" id="IPR045854">
    <property type="entry name" value="NO2/SO3_Rdtase_4Fe4S_sf"/>
</dbReference>
<dbReference type="InterPro" id="IPR006066">
    <property type="entry name" value="NO2/SO3_Rdtase_FeS/sirohaem_BS"/>
</dbReference>
<dbReference type="NCBIfam" id="TIGR02041">
    <property type="entry name" value="CysI"/>
    <property type="match status" value="1"/>
</dbReference>
<dbReference type="NCBIfam" id="NF010029">
    <property type="entry name" value="PRK13504.1"/>
    <property type="match status" value="1"/>
</dbReference>
<dbReference type="PANTHER" id="PTHR11493:SF47">
    <property type="entry name" value="SULFITE REDUCTASE [NADPH] SUBUNIT BETA"/>
    <property type="match status" value="1"/>
</dbReference>
<dbReference type="PANTHER" id="PTHR11493">
    <property type="entry name" value="SULFITE REDUCTASE [NADPH] SUBUNIT BETA-RELATED"/>
    <property type="match status" value="1"/>
</dbReference>
<dbReference type="Pfam" id="PF01077">
    <property type="entry name" value="NIR_SIR"/>
    <property type="match status" value="1"/>
</dbReference>
<dbReference type="Pfam" id="PF03460">
    <property type="entry name" value="NIR_SIR_ferr"/>
    <property type="match status" value="2"/>
</dbReference>
<dbReference type="PRINTS" id="PR00397">
    <property type="entry name" value="SIROHAEM"/>
</dbReference>
<dbReference type="SUPFAM" id="SSF56014">
    <property type="entry name" value="Nitrite and sulphite reductase 4Fe-4S domain-like"/>
    <property type="match status" value="2"/>
</dbReference>
<dbReference type="SUPFAM" id="SSF55124">
    <property type="entry name" value="Nitrite/Sulfite reductase N-terminal domain-like"/>
    <property type="match status" value="2"/>
</dbReference>
<dbReference type="PROSITE" id="PS00365">
    <property type="entry name" value="NIR_SIR"/>
    <property type="match status" value="1"/>
</dbReference>
<reference key="1">
    <citation type="submission" date="2008-02" db="EMBL/GenBank/DDBJ databases">
        <title>Complete sequence of chromosome of Methylobacterium sp. 4-46.</title>
        <authorList>
            <consortium name="US DOE Joint Genome Institute"/>
            <person name="Copeland A."/>
            <person name="Lucas S."/>
            <person name="Lapidus A."/>
            <person name="Glavina del Rio T."/>
            <person name="Dalin E."/>
            <person name="Tice H."/>
            <person name="Bruce D."/>
            <person name="Goodwin L."/>
            <person name="Pitluck S."/>
            <person name="Chertkov O."/>
            <person name="Brettin T."/>
            <person name="Detter J.C."/>
            <person name="Han C."/>
            <person name="Kuske C.R."/>
            <person name="Schmutz J."/>
            <person name="Larimer F."/>
            <person name="Land M."/>
            <person name="Hauser L."/>
            <person name="Kyrpides N."/>
            <person name="Ivanova N."/>
            <person name="Marx C.J."/>
            <person name="Richardson P."/>
        </authorList>
    </citation>
    <scope>NUCLEOTIDE SEQUENCE [LARGE SCALE GENOMIC DNA]</scope>
    <source>
        <strain>4-46</strain>
    </source>
</reference>
<gene>
    <name evidence="1" type="primary">cysI</name>
    <name type="ordered locus">M446_5484</name>
</gene>
<sequence>MDDTKTASPAPARAYETPPAERPITDAEAARAAALSANEHIKIASGYLRGTLADGLLKHATGAISEDDGQLVKFHGMYLQDDRDLRPERTRKKLEKAYSFMIRLRIAGGVVSPRQWLALDDIARTYANGTLRATTRQTFQYHGVIKSNLKRTLQAIDAVLLDTIAACGDVNRNVMAATNPAQTGAHAAAYRLAKDISDSLLPKTNAWREIWLDGERVAGGEDEAAEPVYGRTYLPRKFKTVVAVPPSNEVDVFAHDLGFIAILDKKNALKGWNVTVGGGMGMTHGEPDTFPRTADLLGFCEPADALKVAEAVMTVQRDWGNRKSRKNARLKYTIERYGLAAFRAEVERRVGKPLREPKPFQFTGNGDRYGWVEGEDGRHHLTLYVPSGRIRDVEGGPRYLSGLRRIAEIHEGDFRLTGNQNVIVANVPAGARAEIDRLVAEYGLTIGAGALRRNSLACVALPTCGLALAESERFMPDLLTRLEERLAAHGLRDEDITVRMTGCPNGCARPFIAEIGFVGRGPERYNVYLGAAFDGSRLSKLYADDVAAADIPALLDPLFAAYARERIPGERFGDFVIRAGYVARTVNGPDFHDRTGPLRAVA</sequence>
<organism>
    <name type="scientific">Methylobacterium sp. (strain 4-46)</name>
    <dbReference type="NCBI Taxonomy" id="426117"/>
    <lineage>
        <taxon>Bacteria</taxon>
        <taxon>Pseudomonadati</taxon>
        <taxon>Pseudomonadota</taxon>
        <taxon>Alphaproteobacteria</taxon>
        <taxon>Hyphomicrobiales</taxon>
        <taxon>Methylobacteriaceae</taxon>
        <taxon>Methylobacterium</taxon>
    </lineage>
</organism>
<name>CYSI_METS4</name>
<feature type="chain" id="PRO_0000388499" description="Sulfite reductase [NADPH] hemoprotein beta-component">
    <location>
        <begin position="1"/>
        <end position="602"/>
    </location>
</feature>
<feature type="region of interest" description="Disordered" evidence="2">
    <location>
        <begin position="1"/>
        <end position="23"/>
    </location>
</feature>
<feature type="binding site" evidence="1">
    <location>
        <position position="458"/>
    </location>
    <ligand>
        <name>[4Fe-4S] cluster</name>
        <dbReference type="ChEBI" id="CHEBI:49883"/>
    </ligand>
</feature>
<feature type="binding site" evidence="1">
    <location>
        <position position="464"/>
    </location>
    <ligand>
        <name>[4Fe-4S] cluster</name>
        <dbReference type="ChEBI" id="CHEBI:49883"/>
    </ligand>
</feature>
<feature type="binding site" evidence="1">
    <location>
        <position position="503"/>
    </location>
    <ligand>
        <name>[4Fe-4S] cluster</name>
        <dbReference type="ChEBI" id="CHEBI:49883"/>
    </ligand>
</feature>
<feature type="binding site" evidence="1">
    <location>
        <position position="507"/>
    </location>
    <ligand>
        <name>[4Fe-4S] cluster</name>
        <dbReference type="ChEBI" id="CHEBI:49883"/>
    </ligand>
</feature>
<feature type="binding site" description="axial binding residue" evidence="1">
    <location>
        <position position="507"/>
    </location>
    <ligand>
        <name>siroheme</name>
        <dbReference type="ChEBI" id="CHEBI:60052"/>
    </ligand>
    <ligandPart>
        <name>Fe</name>
        <dbReference type="ChEBI" id="CHEBI:18248"/>
    </ligandPart>
</feature>
<keyword id="KW-0004">4Fe-4S</keyword>
<keyword id="KW-0028">Amino-acid biosynthesis</keyword>
<keyword id="KW-0198">Cysteine biosynthesis</keyword>
<keyword id="KW-0349">Heme</keyword>
<keyword id="KW-0408">Iron</keyword>
<keyword id="KW-0411">Iron-sulfur</keyword>
<keyword id="KW-0479">Metal-binding</keyword>
<keyword id="KW-0521">NADP</keyword>
<keyword id="KW-0560">Oxidoreductase</keyword>
<proteinExistence type="inferred from homology"/>
<comment type="function">
    <text evidence="1">Component of the sulfite reductase complex that catalyzes the 6-electron reduction of sulfite to sulfide. This is one of several activities required for the biosynthesis of L-cysteine from sulfate.</text>
</comment>
<comment type="catalytic activity">
    <reaction evidence="1">
        <text>hydrogen sulfide + 3 NADP(+) + 3 H2O = sulfite + 3 NADPH + 4 H(+)</text>
        <dbReference type="Rhea" id="RHEA:13801"/>
        <dbReference type="ChEBI" id="CHEBI:15377"/>
        <dbReference type="ChEBI" id="CHEBI:15378"/>
        <dbReference type="ChEBI" id="CHEBI:17359"/>
        <dbReference type="ChEBI" id="CHEBI:29919"/>
        <dbReference type="ChEBI" id="CHEBI:57783"/>
        <dbReference type="ChEBI" id="CHEBI:58349"/>
        <dbReference type="EC" id="1.8.1.2"/>
    </reaction>
</comment>
<comment type="cofactor">
    <cofactor evidence="1">
        <name>siroheme</name>
        <dbReference type="ChEBI" id="CHEBI:60052"/>
    </cofactor>
    <text evidence="1">Binds 1 siroheme per subunit.</text>
</comment>
<comment type="cofactor">
    <cofactor evidence="1">
        <name>[4Fe-4S] cluster</name>
        <dbReference type="ChEBI" id="CHEBI:49883"/>
    </cofactor>
    <text evidence="1">Binds 1 [4Fe-4S] cluster per subunit.</text>
</comment>
<comment type="pathway">
    <text evidence="1">Sulfur metabolism; hydrogen sulfide biosynthesis; hydrogen sulfide from sulfite (NADPH route): step 1/1.</text>
</comment>
<comment type="subunit">
    <text evidence="1">Alpha(8)-beta(8). The alpha component is a flavoprotein, the beta component is a hemoprotein.</text>
</comment>
<comment type="similarity">
    <text evidence="1">Belongs to the nitrite and sulfite reductase 4Fe-4S domain family.</text>
</comment>
<protein>
    <recommendedName>
        <fullName evidence="1">Sulfite reductase [NADPH] hemoprotein beta-component</fullName>
        <shortName evidence="1">SiR-HP</shortName>
        <shortName evidence="1">SiRHP</shortName>
        <ecNumber evidence="1">1.8.1.2</ecNumber>
    </recommendedName>
</protein>
<accession>B0U8Y9</accession>
<evidence type="ECO:0000255" key="1">
    <source>
        <dbReference type="HAMAP-Rule" id="MF_01540"/>
    </source>
</evidence>
<evidence type="ECO:0000256" key="2">
    <source>
        <dbReference type="SAM" id="MobiDB-lite"/>
    </source>
</evidence>